<dbReference type="EC" id="2.7.7.60" evidence="1"/>
<dbReference type="EC" id="4.6.1.12" evidence="1"/>
<dbReference type="EMBL" id="AE005673">
    <property type="protein sequence ID" value="AAK23714.1"/>
    <property type="molecule type" value="Genomic_DNA"/>
</dbReference>
<dbReference type="PIR" id="F87464">
    <property type="entry name" value="F87464"/>
</dbReference>
<dbReference type="RefSeq" id="NP_420546.1">
    <property type="nucleotide sequence ID" value="NC_002696.2"/>
</dbReference>
<dbReference type="RefSeq" id="WP_010919606.1">
    <property type="nucleotide sequence ID" value="NC_002696.2"/>
</dbReference>
<dbReference type="SMR" id="Q9A7I5"/>
<dbReference type="STRING" id="190650.CC_1738"/>
<dbReference type="EnsemblBacteria" id="AAK23714">
    <property type="protein sequence ID" value="AAK23714"/>
    <property type="gene ID" value="CC_1738"/>
</dbReference>
<dbReference type="KEGG" id="ccr:CC_1738"/>
<dbReference type="PATRIC" id="fig|190650.5.peg.1762"/>
<dbReference type="eggNOG" id="COG0245">
    <property type="taxonomic scope" value="Bacteria"/>
</dbReference>
<dbReference type="eggNOG" id="COG1211">
    <property type="taxonomic scope" value="Bacteria"/>
</dbReference>
<dbReference type="HOGENOM" id="CLU_042800_0_2_5"/>
<dbReference type="BioCyc" id="CAULO:CC1738-MONOMER"/>
<dbReference type="UniPathway" id="UPA00056">
    <property type="reaction ID" value="UER00093"/>
</dbReference>
<dbReference type="UniPathway" id="UPA00056">
    <property type="reaction ID" value="UER00095"/>
</dbReference>
<dbReference type="Proteomes" id="UP000001816">
    <property type="component" value="Chromosome"/>
</dbReference>
<dbReference type="GO" id="GO:0008685">
    <property type="term" value="F:2-C-methyl-D-erythritol 2,4-cyclodiphosphate synthase activity"/>
    <property type="evidence" value="ECO:0007669"/>
    <property type="project" value="UniProtKB-UniRule"/>
</dbReference>
<dbReference type="GO" id="GO:0050518">
    <property type="term" value="F:2-C-methyl-D-erythritol 4-phosphate cytidylyltransferase activity"/>
    <property type="evidence" value="ECO:0007669"/>
    <property type="project" value="UniProtKB-UniRule"/>
</dbReference>
<dbReference type="GO" id="GO:0046872">
    <property type="term" value="F:metal ion binding"/>
    <property type="evidence" value="ECO:0007669"/>
    <property type="project" value="UniProtKB-KW"/>
</dbReference>
<dbReference type="GO" id="GO:0019288">
    <property type="term" value="P:isopentenyl diphosphate biosynthetic process, methylerythritol 4-phosphate pathway"/>
    <property type="evidence" value="ECO:0007669"/>
    <property type="project" value="UniProtKB-UniRule"/>
</dbReference>
<dbReference type="GO" id="GO:0016114">
    <property type="term" value="P:terpenoid biosynthetic process"/>
    <property type="evidence" value="ECO:0007669"/>
    <property type="project" value="InterPro"/>
</dbReference>
<dbReference type="CDD" id="cd02516">
    <property type="entry name" value="CDP-ME_synthetase"/>
    <property type="match status" value="1"/>
</dbReference>
<dbReference type="CDD" id="cd00554">
    <property type="entry name" value="MECDP_synthase"/>
    <property type="match status" value="1"/>
</dbReference>
<dbReference type="FunFam" id="3.30.1330.50:FF:000003">
    <property type="entry name" value="2-C-methyl-D-erythritol 2,4-cyclodiphosphate synthase"/>
    <property type="match status" value="1"/>
</dbReference>
<dbReference type="Gene3D" id="3.30.1330.50">
    <property type="entry name" value="2-C-methyl-D-erythritol 2,4-cyclodiphosphate synthase"/>
    <property type="match status" value="1"/>
</dbReference>
<dbReference type="Gene3D" id="3.90.550.10">
    <property type="entry name" value="Spore Coat Polysaccharide Biosynthesis Protein SpsA, Chain A"/>
    <property type="match status" value="1"/>
</dbReference>
<dbReference type="HAMAP" id="MF_00108">
    <property type="entry name" value="IspD"/>
    <property type="match status" value="1"/>
</dbReference>
<dbReference type="HAMAP" id="MF_01520">
    <property type="entry name" value="IspDF"/>
    <property type="match status" value="1"/>
</dbReference>
<dbReference type="HAMAP" id="MF_00107">
    <property type="entry name" value="IspF"/>
    <property type="match status" value="1"/>
</dbReference>
<dbReference type="InterPro" id="IPR001228">
    <property type="entry name" value="IspD"/>
</dbReference>
<dbReference type="InterPro" id="IPR026596">
    <property type="entry name" value="IspD/F"/>
</dbReference>
<dbReference type="InterPro" id="IPR034683">
    <property type="entry name" value="IspD/TarI"/>
</dbReference>
<dbReference type="InterPro" id="IPR018294">
    <property type="entry name" value="ISPD_synthase_CS"/>
</dbReference>
<dbReference type="InterPro" id="IPR003526">
    <property type="entry name" value="MECDP_synthase"/>
</dbReference>
<dbReference type="InterPro" id="IPR020555">
    <property type="entry name" value="MECDP_synthase_CS"/>
</dbReference>
<dbReference type="InterPro" id="IPR036571">
    <property type="entry name" value="MECDP_synthase_sf"/>
</dbReference>
<dbReference type="InterPro" id="IPR029044">
    <property type="entry name" value="Nucleotide-diphossugar_trans"/>
</dbReference>
<dbReference type="NCBIfam" id="TIGR00453">
    <property type="entry name" value="ispD"/>
    <property type="match status" value="1"/>
</dbReference>
<dbReference type="NCBIfam" id="TIGR00151">
    <property type="entry name" value="ispF"/>
    <property type="match status" value="1"/>
</dbReference>
<dbReference type="NCBIfam" id="NF006899">
    <property type="entry name" value="PRK09382.1"/>
    <property type="match status" value="1"/>
</dbReference>
<dbReference type="PANTHER" id="PTHR43181">
    <property type="entry name" value="2-C-METHYL-D-ERYTHRITOL 2,4-CYCLODIPHOSPHATE SYNTHASE, CHLOROPLASTIC"/>
    <property type="match status" value="1"/>
</dbReference>
<dbReference type="PANTHER" id="PTHR43181:SF1">
    <property type="entry name" value="2-C-METHYL-D-ERYTHRITOL 2,4-CYCLODIPHOSPHATE SYNTHASE, CHLOROPLASTIC"/>
    <property type="match status" value="1"/>
</dbReference>
<dbReference type="Pfam" id="PF01128">
    <property type="entry name" value="IspD"/>
    <property type="match status" value="1"/>
</dbReference>
<dbReference type="Pfam" id="PF02542">
    <property type="entry name" value="YgbB"/>
    <property type="match status" value="1"/>
</dbReference>
<dbReference type="SUPFAM" id="SSF69765">
    <property type="entry name" value="IpsF-like"/>
    <property type="match status" value="1"/>
</dbReference>
<dbReference type="SUPFAM" id="SSF53448">
    <property type="entry name" value="Nucleotide-diphospho-sugar transferases"/>
    <property type="match status" value="1"/>
</dbReference>
<dbReference type="PROSITE" id="PS01295">
    <property type="entry name" value="ISPD"/>
    <property type="match status" value="1"/>
</dbReference>
<dbReference type="PROSITE" id="PS01350">
    <property type="entry name" value="ISPF"/>
    <property type="match status" value="1"/>
</dbReference>
<keyword id="KW-0414">Isoprene biosynthesis</keyword>
<keyword id="KW-0456">Lyase</keyword>
<keyword id="KW-0479">Metal-binding</keyword>
<keyword id="KW-0511">Multifunctional enzyme</keyword>
<keyword id="KW-0548">Nucleotidyltransferase</keyword>
<keyword id="KW-1185">Reference proteome</keyword>
<keyword id="KW-0808">Transferase</keyword>
<gene>
    <name evidence="1" type="primary">ispDF</name>
    <name type="ordered locus">CC_1738</name>
</gene>
<protein>
    <recommendedName>
        <fullName evidence="1">Bifunctional enzyme IspD/IspF</fullName>
    </recommendedName>
    <domain>
        <recommendedName>
            <fullName evidence="1">2-C-methyl-D-erythritol 4-phosphate cytidylyltransferase</fullName>
            <ecNumber evidence="1">2.7.7.60</ecNumber>
        </recommendedName>
        <alternativeName>
            <fullName evidence="1">4-diphosphocytidyl-2C-methyl-D-erythritol synthase</fullName>
        </alternativeName>
        <alternativeName>
            <fullName evidence="1">MEP cytidylyltransferase</fullName>
            <shortName evidence="1">MCT</shortName>
        </alternativeName>
    </domain>
    <domain>
        <recommendedName>
            <fullName evidence="1">2-C-methyl-D-erythritol 2,4-cyclodiphosphate synthase</fullName>
            <shortName evidence="1">MECDP-synthase</shortName>
            <shortName evidence="1">MECPP-synthase</shortName>
            <shortName evidence="1">MECPS</shortName>
            <ecNumber evidence="1">4.6.1.12</ecNumber>
        </recommendedName>
    </domain>
</protein>
<evidence type="ECO:0000255" key="1">
    <source>
        <dbReference type="HAMAP-Rule" id="MF_01520"/>
    </source>
</evidence>
<comment type="function">
    <text evidence="1">Bifunctional enzyme that catalyzes the formation of 4-diphosphocytidyl-2-C-methyl-D-erythritol from CTP and 2-C-methyl-D-erythritol 4-phosphate (MEP) (IspD), and catalyzes the conversion of 4-diphosphocytidyl-2-C-methyl-D-erythritol 2-phosphate (CDP-ME2P) to 2-C-methyl-D-erythritol 2,4-cyclodiphosphate (ME-CPP) with a corresponding release of cytidine 5-monophosphate (CMP) (IspF).</text>
</comment>
<comment type="catalytic activity">
    <reaction evidence="1">
        <text>2-C-methyl-D-erythritol 4-phosphate + CTP + H(+) = 4-CDP-2-C-methyl-D-erythritol + diphosphate</text>
        <dbReference type="Rhea" id="RHEA:13429"/>
        <dbReference type="ChEBI" id="CHEBI:15378"/>
        <dbReference type="ChEBI" id="CHEBI:33019"/>
        <dbReference type="ChEBI" id="CHEBI:37563"/>
        <dbReference type="ChEBI" id="CHEBI:57823"/>
        <dbReference type="ChEBI" id="CHEBI:58262"/>
        <dbReference type="EC" id="2.7.7.60"/>
    </reaction>
</comment>
<comment type="catalytic activity">
    <reaction evidence="1">
        <text>4-CDP-2-C-methyl-D-erythritol 2-phosphate = 2-C-methyl-D-erythritol 2,4-cyclic diphosphate + CMP</text>
        <dbReference type="Rhea" id="RHEA:23864"/>
        <dbReference type="ChEBI" id="CHEBI:57919"/>
        <dbReference type="ChEBI" id="CHEBI:58483"/>
        <dbReference type="ChEBI" id="CHEBI:60377"/>
        <dbReference type="EC" id="4.6.1.12"/>
    </reaction>
</comment>
<comment type="cofactor">
    <cofactor evidence="1">
        <name>a divalent metal cation</name>
        <dbReference type="ChEBI" id="CHEBI:60240"/>
    </cofactor>
</comment>
<comment type="pathway">
    <text evidence="1">Isoprenoid biosynthesis; isopentenyl diphosphate biosynthesis via DXP pathway; isopentenyl diphosphate from 1-deoxy-D-xylulose 5-phosphate: step 2/6.</text>
</comment>
<comment type="pathway">
    <text evidence="1">Isoprenoid biosynthesis; isopentenyl diphosphate biosynthesis via DXP pathway; isopentenyl diphosphate from 1-deoxy-D-xylulose 5-phosphate: step 4/6.</text>
</comment>
<comment type="similarity">
    <text evidence="1">In the N-terminal section; belongs to the IspD/TarI cytidylyltransferase family. IspD subfamily.</text>
</comment>
<comment type="similarity">
    <text evidence="1">In the C-terminal section; belongs to the IspF family.</text>
</comment>
<reference key="1">
    <citation type="journal article" date="2001" name="Proc. Natl. Acad. Sci. U.S.A.">
        <title>Complete genome sequence of Caulobacter crescentus.</title>
        <authorList>
            <person name="Nierman W.C."/>
            <person name="Feldblyum T.V."/>
            <person name="Laub M.T."/>
            <person name="Paulsen I.T."/>
            <person name="Nelson K.E."/>
            <person name="Eisen J.A."/>
            <person name="Heidelberg J.F."/>
            <person name="Alley M.R.K."/>
            <person name="Ohta N."/>
            <person name="Maddock J.R."/>
            <person name="Potocka I."/>
            <person name="Nelson W.C."/>
            <person name="Newton A."/>
            <person name="Stephens C."/>
            <person name="Phadke N.D."/>
            <person name="Ely B."/>
            <person name="DeBoy R.T."/>
            <person name="Dodson R.J."/>
            <person name="Durkin A.S."/>
            <person name="Gwinn M.L."/>
            <person name="Haft D.H."/>
            <person name="Kolonay J.F."/>
            <person name="Smit J."/>
            <person name="Craven M.B."/>
            <person name="Khouri H.M."/>
            <person name="Shetty J."/>
            <person name="Berry K.J."/>
            <person name="Utterback T.R."/>
            <person name="Tran K."/>
            <person name="Wolf A.M."/>
            <person name="Vamathevan J.J."/>
            <person name="Ermolaeva M.D."/>
            <person name="White O."/>
            <person name="Salzberg S.L."/>
            <person name="Venter J.C."/>
            <person name="Shapiro L."/>
            <person name="Fraser C.M."/>
        </authorList>
    </citation>
    <scope>NUCLEOTIDE SEQUENCE [LARGE SCALE GENOMIC DNA]</scope>
    <source>
        <strain>ATCC 19089 / CIP 103742 / CB 15</strain>
    </source>
</reference>
<proteinExistence type="inferred from homology"/>
<name>ISPDF_CAUVC</name>
<sequence length="382" mass="40049">MTFSVVIVAAGSGTRAGPGQAKQWRVLAGRPVLRWSVEAFLAAGAAEVVVVTTADGEAFLPRMLEGLQGWRSTLGGATRALSVQAGLAALSERPGAEPVMIHDAARPFVSRNVILALLGALSDADLALPALAVADTLKRQPTGEAAQTVSREHLWRAQTPQAARRDTLIAAYAAWTHGEPTDDAQVVEAAGGRIALTAGDPLLTKLTYPEDFAMAEHLAGVARVTRVGQGFDAHRWGPGEEVWLCGVAIKHDETLVGHSDADAGLHALTDAILGAIGEGDIGDHFPPTDPKWKGAASDQFLKHAVDLVTAKGGALVNVDVTLICERPKIKPHRQAMRERLAEILSIPVDRVSVKATTTEKMGFTGRGEGLAASAVVAVETPA</sequence>
<accession>Q9A7I5</accession>
<organism>
    <name type="scientific">Caulobacter vibrioides (strain ATCC 19089 / CIP 103742 / CB 15)</name>
    <name type="common">Caulobacter crescentus</name>
    <dbReference type="NCBI Taxonomy" id="190650"/>
    <lineage>
        <taxon>Bacteria</taxon>
        <taxon>Pseudomonadati</taxon>
        <taxon>Pseudomonadota</taxon>
        <taxon>Alphaproteobacteria</taxon>
        <taxon>Caulobacterales</taxon>
        <taxon>Caulobacteraceae</taxon>
        <taxon>Caulobacter</taxon>
    </lineage>
</organism>
<feature type="chain" id="PRO_0000075664" description="Bifunctional enzyme IspD/IspF">
    <location>
        <begin position="1"/>
        <end position="382"/>
    </location>
</feature>
<feature type="region of interest" description="2-C-methyl-D-erythritol 4-phosphate cytidylyltransferase" evidence="1">
    <location>
        <begin position="1"/>
        <end position="225"/>
    </location>
</feature>
<feature type="region of interest" description="2-C-methyl-D-erythritol 2,4-cyclodiphosphate synthase" evidence="1">
    <location>
        <begin position="226"/>
        <end position="382"/>
    </location>
</feature>
<feature type="binding site" evidence="1">
    <location>
        <begin position="232"/>
        <end position="234"/>
    </location>
    <ligand>
        <name>4-CDP-2-C-methyl-D-erythritol 2-phosphate</name>
        <dbReference type="ChEBI" id="CHEBI:57919"/>
    </ligand>
</feature>
<feature type="binding site" evidence="1">
    <location>
        <position position="232"/>
    </location>
    <ligand>
        <name>a divalent metal cation</name>
        <dbReference type="ChEBI" id="CHEBI:60240"/>
    </ligand>
</feature>
<feature type="binding site" evidence="1">
    <location>
        <position position="234"/>
    </location>
    <ligand>
        <name>a divalent metal cation</name>
        <dbReference type="ChEBI" id="CHEBI:60240"/>
    </ligand>
</feature>
<feature type="binding site" evidence="1">
    <location>
        <begin position="258"/>
        <end position="259"/>
    </location>
    <ligand>
        <name>4-CDP-2-C-methyl-D-erythritol 2-phosphate</name>
        <dbReference type="ChEBI" id="CHEBI:57919"/>
    </ligand>
</feature>
<feature type="binding site" evidence="1">
    <location>
        <position position="266"/>
    </location>
    <ligand>
        <name>a divalent metal cation</name>
        <dbReference type="ChEBI" id="CHEBI:60240"/>
    </ligand>
</feature>
<feature type="binding site" evidence="1">
    <location>
        <begin position="280"/>
        <end position="282"/>
    </location>
    <ligand>
        <name>4-CDP-2-C-methyl-D-erythritol 2-phosphate</name>
        <dbReference type="ChEBI" id="CHEBI:57919"/>
    </ligand>
</feature>
<feature type="binding site" evidence="1">
    <location>
        <begin position="356"/>
        <end position="359"/>
    </location>
    <ligand>
        <name>4-CDP-2-C-methyl-D-erythritol 2-phosphate</name>
        <dbReference type="ChEBI" id="CHEBI:57919"/>
    </ligand>
</feature>
<feature type="binding site" evidence="1">
    <location>
        <position position="363"/>
    </location>
    <ligand>
        <name>4-CDP-2-C-methyl-D-erythritol 2-phosphate</name>
        <dbReference type="ChEBI" id="CHEBI:57919"/>
    </ligand>
</feature>
<feature type="binding site" evidence="1">
    <location>
        <position position="366"/>
    </location>
    <ligand>
        <name>4-CDP-2-C-methyl-D-erythritol 2-phosphate</name>
        <dbReference type="ChEBI" id="CHEBI:57919"/>
    </ligand>
</feature>
<feature type="site" description="Transition state stabilizer" evidence="1">
    <location>
        <position position="15"/>
    </location>
</feature>
<feature type="site" description="Transition state stabilizer" evidence="1">
    <location>
        <position position="22"/>
    </location>
</feature>
<feature type="site" description="Positions MEP for the nucleophilic attack" evidence="1">
    <location>
        <position position="151"/>
    </location>
</feature>
<feature type="site" description="Positions MEP for the nucleophilic attack" evidence="1">
    <location>
        <position position="205"/>
    </location>
</feature>
<feature type="site" description="Transition state stabilizer" evidence="1">
    <location>
        <position position="258"/>
    </location>
</feature>
<feature type="site" description="Transition state stabilizer" evidence="1">
    <location>
        <position position="357"/>
    </location>
</feature>